<name>CAPSD_CMVCS</name>
<proteinExistence type="inferred from homology"/>
<comment type="function">
    <text evidence="1">Capsid protein. Probably binds RNA and plays a role in packaging (By similarity).</text>
</comment>
<comment type="subcellular location">
    <subcellularLocation>
        <location evidence="3">Virion</location>
    </subcellularLocation>
</comment>
<comment type="domain">
    <text evidence="1">The N-terminal arginine-rich stretch does not seem to be the major RNA-binding region that allows formation of an infectious ribonucleoprotein complex.</text>
</comment>
<comment type="similarity">
    <text evidence="3">Belongs to the cucumovirus capsid protein family.</text>
</comment>
<sequence>MDKSESTSAGRNRRRRPRRGSRSAPSSADANFRVLSQQLSRLNKTLAAGRPTINHPTFVGSERCKPGYTFTSITLKPPKIDRGSYYGKRLLLPDSVTEYDKKLVSRIQIRVNPLRKFDSTVWVTVRKVPASSDLSVAAISAMFADGASPVLVYQYAASGVQANNKLLYDLSAMRADIGDMRKYAVLVYSKDDALETDELVLHVDVEHQRIPTSGVLPV</sequence>
<organismHost>
    <name type="scientific">Cucumis sativus</name>
    <name type="common">Cucumber</name>
    <dbReference type="NCBI Taxonomy" id="3659"/>
</organismHost>
<organismHost>
    <name type="scientific">Solanum lycopersicum</name>
    <name type="common">Tomato</name>
    <name type="synonym">Lycopersicon esculentum</name>
    <dbReference type="NCBI Taxonomy" id="4081"/>
</organismHost>
<organismHost>
    <name type="scientific">Spinacia oleracea</name>
    <name type="common">Spinach</name>
    <dbReference type="NCBI Taxonomy" id="3562"/>
</organismHost>
<accession>Q66143</accession>
<dbReference type="EMBL" id="D28489">
    <property type="protein sequence ID" value="BAA05851.1"/>
    <property type="molecule type" value="Genomic_RNA"/>
</dbReference>
<dbReference type="SMR" id="Q66143"/>
<dbReference type="GO" id="GO:1990904">
    <property type="term" value="C:ribonucleoprotein complex"/>
    <property type="evidence" value="ECO:0007669"/>
    <property type="project" value="UniProtKB-KW"/>
</dbReference>
<dbReference type="GO" id="GO:0039617">
    <property type="term" value="C:T=3 icosahedral viral capsid"/>
    <property type="evidence" value="ECO:0007669"/>
    <property type="project" value="UniProtKB-KW"/>
</dbReference>
<dbReference type="GO" id="GO:0019013">
    <property type="term" value="C:viral nucleocapsid"/>
    <property type="evidence" value="ECO:0007669"/>
    <property type="project" value="UniProtKB-KW"/>
</dbReference>
<dbReference type="GO" id="GO:0003723">
    <property type="term" value="F:RNA binding"/>
    <property type="evidence" value="ECO:0007669"/>
    <property type="project" value="UniProtKB-KW"/>
</dbReference>
<dbReference type="GO" id="GO:0005198">
    <property type="term" value="F:structural molecule activity"/>
    <property type="evidence" value="ECO:0007669"/>
    <property type="project" value="InterPro"/>
</dbReference>
<dbReference type="Gene3D" id="2.60.120.530">
    <property type="entry name" value="Cucumovirus coat protein, subunit A"/>
    <property type="match status" value="1"/>
</dbReference>
<dbReference type="InterPro" id="IPR000247">
    <property type="entry name" value="Cucumovirus_coat"/>
</dbReference>
<dbReference type="InterPro" id="IPR037137">
    <property type="entry name" value="Cucumovirus_coat_Asu_sf"/>
</dbReference>
<dbReference type="Pfam" id="PF00760">
    <property type="entry name" value="Cucumo_coat"/>
    <property type="match status" value="1"/>
</dbReference>
<dbReference type="PRINTS" id="PR00222">
    <property type="entry name" value="CUCUMOCOAT"/>
</dbReference>
<dbReference type="SUPFAM" id="SSF88633">
    <property type="entry name" value="Positive stranded ssRNA viruses"/>
    <property type="match status" value="1"/>
</dbReference>
<organism>
    <name type="scientific">Cucumber mosaic virus (strain CS)</name>
    <name type="common">CMV</name>
    <dbReference type="NCBI Taxonomy" id="117109"/>
    <lineage>
        <taxon>Viruses</taxon>
        <taxon>Riboviria</taxon>
        <taxon>Orthornavirae</taxon>
        <taxon>Kitrinoviricota</taxon>
        <taxon>Alsuviricetes</taxon>
        <taxon>Martellivirales</taxon>
        <taxon>Bromoviridae</taxon>
        <taxon>Cucumovirus</taxon>
        <taxon>Cucumber mosaic virus</taxon>
    </lineage>
</organism>
<reference key="1">
    <citation type="journal article" date="1996" name="Nihon Shokubutsu Byori Gakkaiho">
        <title>Six new subgroup I members of Japanese cucumber mosaic virus as determined by nucleotide sequence analysis on RNA3's cDNAs.</title>
        <authorList>
            <person name="Chaumpluk P."/>
            <person name="Sasaki Y."/>
            <person name="Nakajima N."/>
            <person name="Nagano H."/>
            <person name="Nakamura I."/>
            <person name="Suzuki K."/>
            <person name="Mise K."/>
            <person name="Inouye N."/>
            <person name="Okuno T."/>
            <person name="Furusawa I."/>
        </authorList>
    </citation>
    <scope>NUCLEOTIDE SEQUENCE [GENOMIC RNA]</scope>
</reference>
<feature type="chain" id="PRO_0000083200" description="Capsid protein">
    <location>
        <begin position="1"/>
        <end position="218"/>
    </location>
</feature>
<feature type="region of interest" description="Disordered" evidence="2">
    <location>
        <begin position="1"/>
        <end position="28"/>
    </location>
</feature>
<feature type="compositionally biased region" description="Basic residues" evidence="2">
    <location>
        <begin position="11"/>
        <end position="21"/>
    </location>
</feature>
<feature type="modified residue" description="N-acetylmethionine; by host" evidence="1">
    <location>
        <position position="1"/>
    </location>
</feature>
<protein>
    <recommendedName>
        <fullName>Capsid protein</fullName>
        <shortName>CP</shortName>
    </recommendedName>
    <alternativeName>
        <fullName>Coat protein</fullName>
    </alternativeName>
</protein>
<evidence type="ECO:0000250" key="1"/>
<evidence type="ECO:0000256" key="2">
    <source>
        <dbReference type="SAM" id="MobiDB-lite"/>
    </source>
</evidence>
<evidence type="ECO:0000305" key="3"/>
<keyword id="KW-0007">Acetylation</keyword>
<keyword id="KW-0167">Capsid protein</keyword>
<keyword id="KW-0687">Ribonucleoprotein</keyword>
<keyword id="KW-0694">RNA-binding</keyword>
<keyword id="KW-1142">T=3 icosahedral capsid protein</keyword>
<keyword id="KW-0543">Viral nucleoprotein</keyword>
<keyword id="KW-0946">Virion</keyword>
<gene>
    <name type="ORF">ORF3b</name>
</gene>